<feature type="chain" id="PRO_1000204370" description="Translation initiation factor 2 subunit alpha">
    <location>
        <begin position="1"/>
        <end position="266"/>
    </location>
</feature>
<feature type="domain" description="S1 motif" evidence="1">
    <location>
        <begin position="12"/>
        <end position="83"/>
    </location>
</feature>
<keyword id="KW-0396">Initiation factor</keyword>
<keyword id="KW-0648">Protein biosynthesis</keyword>
<keyword id="KW-0694">RNA-binding</keyword>
<proteinExistence type="inferred from homology"/>
<reference key="1">
    <citation type="journal article" date="2009" name="Proc. Natl. Acad. Sci. U.S.A.">
        <title>Biogeography of the Sulfolobus islandicus pan-genome.</title>
        <authorList>
            <person name="Reno M.L."/>
            <person name="Held N.L."/>
            <person name="Fields C.J."/>
            <person name="Burke P.V."/>
            <person name="Whitaker R.J."/>
        </authorList>
    </citation>
    <scope>NUCLEOTIDE SEQUENCE [LARGE SCALE GENOMIC DNA]</scope>
    <source>
        <strain>M.16.27</strain>
    </source>
</reference>
<evidence type="ECO:0000255" key="1">
    <source>
        <dbReference type="HAMAP-Rule" id="MF_00231"/>
    </source>
</evidence>
<name>IF2A_SACI3</name>
<comment type="function">
    <text evidence="1">eIF-2 functions in the early steps of protein synthesis by forming a ternary complex with GTP and initiator tRNA.</text>
</comment>
<comment type="subunit">
    <text evidence="1">Heterotrimer composed of an alpha, a beta and a gamma chain.</text>
</comment>
<comment type="similarity">
    <text evidence="1">Belongs to the eIF-2-alpha family.</text>
</comment>
<protein>
    <recommendedName>
        <fullName evidence="1">Translation initiation factor 2 subunit alpha</fullName>
    </recommendedName>
    <alternativeName>
        <fullName evidence="1">aIF2-alpha</fullName>
    </alternativeName>
    <alternativeName>
        <fullName evidence="1">eIF-2-alpha</fullName>
    </alternativeName>
</protein>
<sequence length="266" mass="30340">MIYSRSRLPSEGEILIATVKQVFDYGSYVTLDEYGGLQAFLPWSEVSSKWVKNIRDVLKENRKVVVKVIRVDRRKGTVDVSLKKVTDDERRKKNLQWKKIQRLDKILELVSQQLKLSEKDAWEQVAWKLEAKYGDPISAIERAVKEGEKILIDAGVPEIWIKPLLEEAAKHTEEKKVKMSGLITVKTSEPLGVQKIKEVISKALENIEQDYESILNVKIYTIGAPRYRVDVVGTNPKDASEALNQIISNLIKIGKEENVDISVVKK</sequence>
<organism>
    <name type="scientific">Saccharolobus islandicus (strain M.16.27)</name>
    <name type="common">Sulfolobus islandicus</name>
    <dbReference type="NCBI Taxonomy" id="427318"/>
    <lineage>
        <taxon>Archaea</taxon>
        <taxon>Thermoproteota</taxon>
        <taxon>Thermoprotei</taxon>
        <taxon>Sulfolobales</taxon>
        <taxon>Sulfolobaceae</taxon>
        <taxon>Saccharolobus</taxon>
    </lineage>
</organism>
<gene>
    <name evidence="1" type="primary">eif2a</name>
    <name type="ordered locus">M1627_1233</name>
</gene>
<dbReference type="EMBL" id="CP001401">
    <property type="protein sequence ID" value="ACP55120.1"/>
    <property type="molecule type" value="Genomic_DNA"/>
</dbReference>
<dbReference type="RefSeq" id="WP_012711192.1">
    <property type="nucleotide sequence ID" value="NC_012632.1"/>
</dbReference>
<dbReference type="SMR" id="C3N545"/>
<dbReference type="KEGG" id="sim:M1627_1233"/>
<dbReference type="HOGENOM" id="CLU_033458_0_2_2"/>
<dbReference type="Proteomes" id="UP000002307">
    <property type="component" value="Chromosome"/>
</dbReference>
<dbReference type="GO" id="GO:0043022">
    <property type="term" value="F:ribosome binding"/>
    <property type="evidence" value="ECO:0007669"/>
    <property type="project" value="TreeGrafter"/>
</dbReference>
<dbReference type="GO" id="GO:0003723">
    <property type="term" value="F:RNA binding"/>
    <property type="evidence" value="ECO:0007669"/>
    <property type="project" value="UniProtKB-UniRule"/>
</dbReference>
<dbReference type="GO" id="GO:0003743">
    <property type="term" value="F:translation initiation factor activity"/>
    <property type="evidence" value="ECO:0007669"/>
    <property type="project" value="UniProtKB-UniRule"/>
</dbReference>
<dbReference type="CDD" id="cd04452">
    <property type="entry name" value="S1_IF2_alpha"/>
    <property type="match status" value="1"/>
</dbReference>
<dbReference type="FunFam" id="2.40.50.140:FF:000015">
    <property type="entry name" value="Eukaryotic translation initiation factor 2 subunit alpha"/>
    <property type="match status" value="1"/>
</dbReference>
<dbReference type="Gene3D" id="3.30.70.1130">
    <property type="entry name" value="EIF_2_alpha"/>
    <property type="match status" value="1"/>
</dbReference>
<dbReference type="Gene3D" id="2.40.50.140">
    <property type="entry name" value="Nucleic acid-binding proteins"/>
    <property type="match status" value="1"/>
</dbReference>
<dbReference type="Gene3D" id="1.10.150.190">
    <property type="entry name" value="Translation initiation factor 2, subunit 1, domain 2"/>
    <property type="match status" value="1"/>
</dbReference>
<dbReference type="HAMAP" id="MF_00231">
    <property type="entry name" value="eIF_2_alpha"/>
    <property type="match status" value="1"/>
</dbReference>
<dbReference type="InterPro" id="IPR012340">
    <property type="entry name" value="NA-bd_OB-fold"/>
</dbReference>
<dbReference type="InterPro" id="IPR003029">
    <property type="entry name" value="S1_domain"/>
</dbReference>
<dbReference type="InterPro" id="IPR044126">
    <property type="entry name" value="S1_IF2_alpha"/>
</dbReference>
<dbReference type="InterPro" id="IPR022964">
    <property type="entry name" value="TIF2_asu_arc"/>
</dbReference>
<dbReference type="InterPro" id="IPR024055">
    <property type="entry name" value="TIF2_asu_C"/>
</dbReference>
<dbReference type="InterPro" id="IPR024054">
    <property type="entry name" value="TIF2_asu_middle_sf"/>
</dbReference>
<dbReference type="InterPro" id="IPR011488">
    <property type="entry name" value="TIF_2_asu"/>
</dbReference>
<dbReference type="NCBIfam" id="NF003062">
    <property type="entry name" value="PRK03987.1-1"/>
    <property type="match status" value="1"/>
</dbReference>
<dbReference type="PANTHER" id="PTHR10602">
    <property type="entry name" value="EUKARYOTIC TRANSLATION INITIATION FACTOR 2 SUBUNIT 1"/>
    <property type="match status" value="1"/>
</dbReference>
<dbReference type="PANTHER" id="PTHR10602:SF0">
    <property type="entry name" value="EUKARYOTIC TRANSLATION INITIATION FACTOR 2 SUBUNIT 1"/>
    <property type="match status" value="1"/>
</dbReference>
<dbReference type="Pfam" id="PF07541">
    <property type="entry name" value="EIF_2_alpha"/>
    <property type="match status" value="1"/>
</dbReference>
<dbReference type="Pfam" id="PF00575">
    <property type="entry name" value="S1"/>
    <property type="match status" value="1"/>
</dbReference>
<dbReference type="SMART" id="SM00316">
    <property type="entry name" value="S1"/>
    <property type="match status" value="1"/>
</dbReference>
<dbReference type="SUPFAM" id="SSF110993">
    <property type="entry name" value="eIF-2-alpha, C-terminal domain"/>
    <property type="match status" value="1"/>
</dbReference>
<dbReference type="SUPFAM" id="SSF116742">
    <property type="entry name" value="eIF2alpha middle domain-like"/>
    <property type="match status" value="1"/>
</dbReference>
<dbReference type="SUPFAM" id="SSF50249">
    <property type="entry name" value="Nucleic acid-binding proteins"/>
    <property type="match status" value="1"/>
</dbReference>
<dbReference type="PROSITE" id="PS50126">
    <property type="entry name" value="S1"/>
    <property type="match status" value="1"/>
</dbReference>
<accession>C3N545</accession>